<name>RL5_STAES</name>
<accession>Q8CRH2</accession>
<protein>
    <recommendedName>
        <fullName evidence="1">Large ribosomal subunit protein uL5</fullName>
    </recommendedName>
    <alternativeName>
        <fullName evidence="2">50S ribosomal protein L5</fullName>
    </alternativeName>
</protein>
<comment type="function">
    <text evidence="1">This is one of the proteins that bind and probably mediate the attachment of the 5S RNA into the large ribosomal subunit, where it forms part of the central protuberance. In the 70S ribosome it contacts protein S13 of the 30S subunit (bridge B1b), connecting the 2 subunits; this bridge is implicated in subunit movement. Contacts the P site tRNA; the 5S rRNA and some of its associated proteins might help stabilize positioning of ribosome-bound tRNAs.</text>
</comment>
<comment type="subunit">
    <text evidence="1">Part of the 50S ribosomal subunit; part of the 5S rRNA/L5/L18/L25 subcomplex. Contacts the 5S rRNA and the P site tRNA. Forms a bridge to the 30S subunit in the 70S ribosome.</text>
</comment>
<comment type="similarity">
    <text evidence="1">Belongs to the universal ribosomal protein uL5 family.</text>
</comment>
<feature type="chain" id="PRO_0000124992" description="Large ribosomal subunit protein uL5">
    <location>
        <begin position="1"/>
        <end position="179"/>
    </location>
</feature>
<sequence length="179" mass="20236">MNRLKEKFNTEVTENLVKKFNYSSVMEVPKIEKIVVNMGVGDAVQNSKVLDNAVEELELITGQKPLVTKAKKSVATFRLREGMPIGAKVTLRGERMYEFLDKLIAVSLPRVRDFQGVSKTAFDGRGNYTLGVKEQLIFPEIDYDKVTKVRGMDIVIVTTANTDEEARELLTNFGMPFRK</sequence>
<proteinExistence type="inferred from homology"/>
<evidence type="ECO:0000255" key="1">
    <source>
        <dbReference type="HAMAP-Rule" id="MF_01333"/>
    </source>
</evidence>
<evidence type="ECO:0000305" key="2"/>
<dbReference type="EMBL" id="AE015929">
    <property type="protein sequence ID" value="AAO05452.1"/>
    <property type="molecule type" value="Genomic_DNA"/>
</dbReference>
<dbReference type="RefSeq" id="NP_765366.1">
    <property type="nucleotide sequence ID" value="NC_004461.1"/>
</dbReference>
<dbReference type="RefSeq" id="WP_001829778.1">
    <property type="nucleotide sequence ID" value="NZ_WBME01000007.1"/>
</dbReference>
<dbReference type="SMR" id="Q8CRH2"/>
<dbReference type="GeneID" id="50018085"/>
<dbReference type="KEGG" id="sep:SE_1811"/>
<dbReference type="PATRIC" id="fig|176280.10.peg.1768"/>
<dbReference type="eggNOG" id="COG0094">
    <property type="taxonomic scope" value="Bacteria"/>
</dbReference>
<dbReference type="HOGENOM" id="CLU_061015_2_1_9"/>
<dbReference type="OrthoDB" id="9806626at2"/>
<dbReference type="Proteomes" id="UP000001411">
    <property type="component" value="Chromosome"/>
</dbReference>
<dbReference type="GO" id="GO:1990904">
    <property type="term" value="C:ribonucleoprotein complex"/>
    <property type="evidence" value="ECO:0007669"/>
    <property type="project" value="UniProtKB-KW"/>
</dbReference>
<dbReference type="GO" id="GO:0005840">
    <property type="term" value="C:ribosome"/>
    <property type="evidence" value="ECO:0007669"/>
    <property type="project" value="UniProtKB-KW"/>
</dbReference>
<dbReference type="GO" id="GO:0019843">
    <property type="term" value="F:rRNA binding"/>
    <property type="evidence" value="ECO:0007669"/>
    <property type="project" value="UniProtKB-UniRule"/>
</dbReference>
<dbReference type="GO" id="GO:0003735">
    <property type="term" value="F:structural constituent of ribosome"/>
    <property type="evidence" value="ECO:0007669"/>
    <property type="project" value="InterPro"/>
</dbReference>
<dbReference type="GO" id="GO:0000049">
    <property type="term" value="F:tRNA binding"/>
    <property type="evidence" value="ECO:0007669"/>
    <property type="project" value="UniProtKB-UniRule"/>
</dbReference>
<dbReference type="GO" id="GO:0006412">
    <property type="term" value="P:translation"/>
    <property type="evidence" value="ECO:0007669"/>
    <property type="project" value="UniProtKB-UniRule"/>
</dbReference>
<dbReference type="FunFam" id="3.30.1440.10:FF:000001">
    <property type="entry name" value="50S ribosomal protein L5"/>
    <property type="match status" value="1"/>
</dbReference>
<dbReference type="Gene3D" id="3.30.1440.10">
    <property type="match status" value="1"/>
</dbReference>
<dbReference type="HAMAP" id="MF_01333_B">
    <property type="entry name" value="Ribosomal_uL5_B"/>
    <property type="match status" value="1"/>
</dbReference>
<dbReference type="InterPro" id="IPR002132">
    <property type="entry name" value="Ribosomal_uL5"/>
</dbReference>
<dbReference type="InterPro" id="IPR020930">
    <property type="entry name" value="Ribosomal_uL5_bac-type"/>
</dbReference>
<dbReference type="InterPro" id="IPR031309">
    <property type="entry name" value="Ribosomal_uL5_C"/>
</dbReference>
<dbReference type="InterPro" id="IPR020929">
    <property type="entry name" value="Ribosomal_uL5_CS"/>
</dbReference>
<dbReference type="InterPro" id="IPR022803">
    <property type="entry name" value="Ribosomal_uL5_dom_sf"/>
</dbReference>
<dbReference type="InterPro" id="IPR031310">
    <property type="entry name" value="Ribosomal_uL5_N"/>
</dbReference>
<dbReference type="NCBIfam" id="NF000585">
    <property type="entry name" value="PRK00010.1"/>
    <property type="match status" value="1"/>
</dbReference>
<dbReference type="PANTHER" id="PTHR11994">
    <property type="entry name" value="60S RIBOSOMAL PROTEIN L11-RELATED"/>
    <property type="match status" value="1"/>
</dbReference>
<dbReference type="Pfam" id="PF00281">
    <property type="entry name" value="Ribosomal_L5"/>
    <property type="match status" value="1"/>
</dbReference>
<dbReference type="Pfam" id="PF00673">
    <property type="entry name" value="Ribosomal_L5_C"/>
    <property type="match status" value="1"/>
</dbReference>
<dbReference type="PIRSF" id="PIRSF002161">
    <property type="entry name" value="Ribosomal_L5"/>
    <property type="match status" value="1"/>
</dbReference>
<dbReference type="SUPFAM" id="SSF55282">
    <property type="entry name" value="RL5-like"/>
    <property type="match status" value="1"/>
</dbReference>
<dbReference type="PROSITE" id="PS00358">
    <property type="entry name" value="RIBOSOMAL_L5"/>
    <property type="match status" value="1"/>
</dbReference>
<gene>
    <name evidence="1" type="primary">rplE</name>
    <name type="ordered locus">SE_1811</name>
</gene>
<organism>
    <name type="scientific">Staphylococcus epidermidis (strain ATCC 12228 / FDA PCI 1200)</name>
    <dbReference type="NCBI Taxonomy" id="176280"/>
    <lineage>
        <taxon>Bacteria</taxon>
        <taxon>Bacillati</taxon>
        <taxon>Bacillota</taxon>
        <taxon>Bacilli</taxon>
        <taxon>Bacillales</taxon>
        <taxon>Staphylococcaceae</taxon>
        <taxon>Staphylococcus</taxon>
    </lineage>
</organism>
<reference key="1">
    <citation type="journal article" date="2003" name="Mol. Microbiol.">
        <title>Genome-based analysis of virulence genes in a non-biofilm-forming Staphylococcus epidermidis strain (ATCC 12228).</title>
        <authorList>
            <person name="Zhang Y.-Q."/>
            <person name="Ren S.-X."/>
            <person name="Li H.-L."/>
            <person name="Wang Y.-X."/>
            <person name="Fu G."/>
            <person name="Yang J."/>
            <person name="Qin Z.-Q."/>
            <person name="Miao Y.-G."/>
            <person name="Wang W.-Y."/>
            <person name="Chen R.-S."/>
            <person name="Shen Y."/>
            <person name="Chen Z."/>
            <person name="Yuan Z.-H."/>
            <person name="Zhao G.-P."/>
            <person name="Qu D."/>
            <person name="Danchin A."/>
            <person name="Wen Y.-M."/>
        </authorList>
    </citation>
    <scope>NUCLEOTIDE SEQUENCE [LARGE SCALE GENOMIC DNA]</scope>
    <source>
        <strain>ATCC 12228 / FDA PCI 1200</strain>
    </source>
</reference>
<keyword id="KW-0687">Ribonucleoprotein</keyword>
<keyword id="KW-0689">Ribosomal protein</keyword>
<keyword id="KW-0694">RNA-binding</keyword>
<keyword id="KW-0699">rRNA-binding</keyword>
<keyword id="KW-0820">tRNA-binding</keyword>